<evidence type="ECO:0000255" key="1">
    <source>
        <dbReference type="HAMAP-Rule" id="MF_01629"/>
    </source>
</evidence>
<comment type="function">
    <text evidence="1">Catalyzes the oxidation of either pyridoxine 5'-phosphate (PNP) or pyridoxamine 5'-phosphate (PMP) into pyridoxal 5'-phosphate (PLP).</text>
</comment>
<comment type="catalytic activity">
    <reaction evidence="1">
        <text>pyridoxamine 5'-phosphate + O2 + H2O = pyridoxal 5'-phosphate + H2O2 + NH4(+)</text>
        <dbReference type="Rhea" id="RHEA:15817"/>
        <dbReference type="ChEBI" id="CHEBI:15377"/>
        <dbReference type="ChEBI" id="CHEBI:15379"/>
        <dbReference type="ChEBI" id="CHEBI:16240"/>
        <dbReference type="ChEBI" id="CHEBI:28938"/>
        <dbReference type="ChEBI" id="CHEBI:58451"/>
        <dbReference type="ChEBI" id="CHEBI:597326"/>
        <dbReference type="EC" id="1.4.3.5"/>
    </reaction>
</comment>
<comment type="catalytic activity">
    <reaction evidence="1">
        <text>pyridoxine 5'-phosphate + O2 = pyridoxal 5'-phosphate + H2O2</text>
        <dbReference type="Rhea" id="RHEA:15149"/>
        <dbReference type="ChEBI" id="CHEBI:15379"/>
        <dbReference type="ChEBI" id="CHEBI:16240"/>
        <dbReference type="ChEBI" id="CHEBI:58589"/>
        <dbReference type="ChEBI" id="CHEBI:597326"/>
        <dbReference type="EC" id="1.4.3.5"/>
    </reaction>
</comment>
<comment type="cofactor">
    <cofactor evidence="1">
        <name>FMN</name>
        <dbReference type="ChEBI" id="CHEBI:58210"/>
    </cofactor>
    <text evidence="1">Binds 1 FMN per subunit.</text>
</comment>
<comment type="pathway">
    <text evidence="1">Cofactor metabolism; pyridoxal 5'-phosphate salvage; pyridoxal 5'-phosphate from pyridoxamine 5'-phosphate: step 1/1.</text>
</comment>
<comment type="pathway">
    <text evidence="1">Cofactor metabolism; pyridoxal 5'-phosphate salvage; pyridoxal 5'-phosphate from pyridoxine 5'-phosphate: step 1/1.</text>
</comment>
<comment type="subunit">
    <text evidence="1">Homodimer.</text>
</comment>
<comment type="similarity">
    <text evidence="1">Belongs to the pyridoxamine 5'-phosphate oxidase family.</text>
</comment>
<name>PDXH_ECOUT</name>
<protein>
    <recommendedName>
        <fullName evidence="1">Pyridoxine/pyridoxamine 5'-phosphate oxidase</fullName>
        <ecNumber evidence="1">1.4.3.5</ecNumber>
    </recommendedName>
    <alternativeName>
        <fullName evidence="1">PNP/PMP oxidase</fullName>
        <shortName evidence="1">PNPOx</shortName>
    </alternativeName>
    <alternativeName>
        <fullName evidence="1">Pyridoxal 5'-phosphate synthase</fullName>
    </alternativeName>
</protein>
<feature type="chain" id="PRO_0000255866" description="Pyridoxine/pyridoxamine 5'-phosphate oxidase">
    <location>
        <begin position="1"/>
        <end position="218"/>
    </location>
</feature>
<feature type="binding site" evidence="1">
    <location>
        <begin position="14"/>
        <end position="17"/>
    </location>
    <ligand>
        <name>substrate</name>
    </ligand>
</feature>
<feature type="binding site" evidence="1">
    <location>
        <begin position="67"/>
        <end position="72"/>
    </location>
    <ligand>
        <name>FMN</name>
        <dbReference type="ChEBI" id="CHEBI:58210"/>
    </ligand>
</feature>
<feature type="binding site" evidence="1">
    <location>
        <position position="72"/>
    </location>
    <ligand>
        <name>substrate</name>
    </ligand>
</feature>
<feature type="binding site" evidence="1">
    <location>
        <begin position="82"/>
        <end position="83"/>
    </location>
    <ligand>
        <name>FMN</name>
        <dbReference type="ChEBI" id="CHEBI:58210"/>
    </ligand>
</feature>
<feature type="binding site" evidence="1">
    <location>
        <position position="88"/>
    </location>
    <ligand>
        <name>FMN</name>
        <dbReference type="ChEBI" id="CHEBI:58210"/>
    </ligand>
</feature>
<feature type="binding site" evidence="1">
    <location>
        <position position="89"/>
    </location>
    <ligand>
        <name>FMN</name>
        <dbReference type="ChEBI" id="CHEBI:58210"/>
    </ligand>
</feature>
<feature type="binding site" evidence="1">
    <location>
        <position position="111"/>
    </location>
    <ligand>
        <name>FMN</name>
        <dbReference type="ChEBI" id="CHEBI:58210"/>
    </ligand>
</feature>
<feature type="binding site" evidence="1">
    <location>
        <position position="129"/>
    </location>
    <ligand>
        <name>substrate</name>
    </ligand>
</feature>
<feature type="binding site" evidence="1">
    <location>
        <position position="133"/>
    </location>
    <ligand>
        <name>substrate</name>
    </ligand>
</feature>
<feature type="binding site" evidence="1">
    <location>
        <position position="137"/>
    </location>
    <ligand>
        <name>substrate</name>
    </ligand>
</feature>
<feature type="binding site" evidence="1">
    <location>
        <begin position="146"/>
        <end position="147"/>
    </location>
    <ligand>
        <name>FMN</name>
        <dbReference type="ChEBI" id="CHEBI:58210"/>
    </ligand>
</feature>
<feature type="binding site" evidence="1">
    <location>
        <position position="191"/>
    </location>
    <ligand>
        <name>FMN</name>
        <dbReference type="ChEBI" id="CHEBI:58210"/>
    </ligand>
</feature>
<feature type="binding site" evidence="1">
    <location>
        <begin position="197"/>
        <end position="199"/>
    </location>
    <ligand>
        <name>substrate</name>
    </ligand>
</feature>
<feature type="binding site" evidence="1">
    <location>
        <position position="201"/>
    </location>
    <ligand>
        <name>FMN</name>
        <dbReference type="ChEBI" id="CHEBI:58210"/>
    </ligand>
</feature>
<proteinExistence type="inferred from homology"/>
<gene>
    <name evidence="1" type="primary">pdxH</name>
    <name type="ordered locus">UTI89_C1829</name>
</gene>
<dbReference type="EC" id="1.4.3.5" evidence="1"/>
<dbReference type="EMBL" id="CP000243">
    <property type="protein sequence ID" value="ABE07307.1"/>
    <property type="molecule type" value="Genomic_DNA"/>
</dbReference>
<dbReference type="RefSeq" id="WP_001282316.1">
    <property type="nucleotide sequence ID" value="NZ_CP064825.1"/>
</dbReference>
<dbReference type="SMR" id="Q1RBF7"/>
<dbReference type="KEGG" id="eci:UTI89_C1829"/>
<dbReference type="HOGENOM" id="CLU_032263_2_2_6"/>
<dbReference type="UniPathway" id="UPA01068">
    <property type="reaction ID" value="UER00304"/>
</dbReference>
<dbReference type="UniPathway" id="UPA01068">
    <property type="reaction ID" value="UER00305"/>
</dbReference>
<dbReference type="Proteomes" id="UP000001952">
    <property type="component" value="Chromosome"/>
</dbReference>
<dbReference type="GO" id="GO:0010181">
    <property type="term" value="F:FMN binding"/>
    <property type="evidence" value="ECO:0007669"/>
    <property type="project" value="UniProtKB-UniRule"/>
</dbReference>
<dbReference type="GO" id="GO:0004733">
    <property type="term" value="F:pyridoxamine phosphate oxidase activity"/>
    <property type="evidence" value="ECO:0007669"/>
    <property type="project" value="UniProtKB-UniRule"/>
</dbReference>
<dbReference type="GO" id="GO:0008615">
    <property type="term" value="P:pyridoxine biosynthetic process"/>
    <property type="evidence" value="ECO:0007669"/>
    <property type="project" value="UniProtKB-KW"/>
</dbReference>
<dbReference type="FunFam" id="2.30.110.10:FF:000001">
    <property type="entry name" value="Pyridoxine/pyridoxamine 5'-phosphate oxidase"/>
    <property type="match status" value="1"/>
</dbReference>
<dbReference type="Gene3D" id="2.30.110.10">
    <property type="entry name" value="Electron Transport, Fmn-binding Protein, Chain A"/>
    <property type="match status" value="1"/>
</dbReference>
<dbReference type="HAMAP" id="MF_01629">
    <property type="entry name" value="PdxH"/>
    <property type="match status" value="1"/>
</dbReference>
<dbReference type="InterPro" id="IPR000659">
    <property type="entry name" value="Pyridox_Oxase"/>
</dbReference>
<dbReference type="InterPro" id="IPR019740">
    <property type="entry name" value="Pyridox_Oxase_CS"/>
</dbReference>
<dbReference type="InterPro" id="IPR011576">
    <property type="entry name" value="Pyridox_Oxase_N"/>
</dbReference>
<dbReference type="InterPro" id="IPR019576">
    <property type="entry name" value="Pyridoxamine_oxidase_dimer_C"/>
</dbReference>
<dbReference type="InterPro" id="IPR012349">
    <property type="entry name" value="Split_barrel_FMN-bd"/>
</dbReference>
<dbReference type="NCBIfam" id="TIGR00558">
    <property type="entry name" value="pdxH"/>
    <property type="match status" value="1"/>
</dbReference>
<dbReference type="NCBIfam" id="NF004231">
    <property type="entry name" value="PRK05679.1"/>
    <property type="match status" value="1"/>
</dbReference>
<dbReference type="PANTHER" id="PTHR10851:SF0">
    <property type="entry name" value="PYRIDOXINE-5'-PHOSPHATE OXIDASE"/>
    <property type="match status" value="1"/>
</dbReference>
<dbReference type="PANTHER" id="PTHR10851">
    <property type="entry name" value="PYRIDOXINE-5-PHOSPHATE OXIDASE"/>
    <property type="match status" value="1"/>
</dbReference>
<dbReference type="Pfam" id="PF10590">
    <property type="entry name" value="PNP_phzG_C"/>
    <property type="match status" value="1"/>
</dbReference>
<dbReference type="Pfam" id="PF01243">
    <property type="entry name" value="PNPOx_N"/>
    <property type="match status" value="1"/>
</dbReference>
<dbReference type="PIRSF" id="PIRSF000190">
    <property type="entry name" value="Pyd_amn-ph_oxd"/>
    <property type="match status" value="1"/>
</dbReference>
<dbReference type="SUPFAM" id="SSF50475">
    <property type="entry name" value="FMN-binding split barrel"/>
    <property type="match status" value="1"/>
</dbReference>
<dbReference type="PROSITE" id="PS01064">
    <property type="entry name" value="PYRIDOX_OXIDASE"/>
    <property type="match status" value="1"/>
</dbReference>
<reference key="1">
    <citation type="journal article" date="2006" name="Proc. Natl. Acad. Sci. U.S.A.">
        <title>Identification of genes subject to positive selection in uropathogenic strains of Escherichia coli: a comparative genomics approach.</title>
        <authorList>
            <person name="Chen S.L."/>
            <person name="Hung C.-S."/>
            <person name="Xu J."/>
            <person name="Reigstad C.S."/>
            <person name="Magrini V."/>
            <person name="Sabo A."/>
            <person name="Blasiar D."/>
            <person name="Bieri T."/>
            <person name="Meyer R.R."/>
            <person name="Ozersky P."/>
            <person name="Armstrong J.R."/>
            <person name="Fulton R.S."/>
            <person name="Latreille J.P."/>
            <person name="Spieth J."/>
            <person name="Hooton T.M."/>
            <person name="Mardis E.R."/>
            <person name="Hultgren S.J."/>
            <person name="Gordon J.I."/>
        </authorList>
    </citation>
    <scope>NUCLEOTIDE SEQUENCE [LARGE SCALE GENOMIC DNA]</scope>
    <source>
        <strain>UTI89 / UPEC</strain>
    </source>
</reference>
<sequence>MSDNDELQQIAHLRREYTKGGLRRRDLPADPLTLFERWLSQACEAKLADPTAMVVATVDEHDQPYQRIVLLKHYDEKGMVFYTNLGSRKAHQIENNPRVSLLFPWHTLERQVMVIGKAERLSTLEVMKYFHSRPRDSQIGAWVSKQSSRISARGILESKFLELKQKFQQGEVPLPSFWGGFRVSLEQIEFWQGGEHRLHDRFLYQRENDAWKIDRLAP</sequence>
<keyword id="KW-0285">Flavoprotein</keyword>
<keyword id="KW-0288">FMN</keyword>
<keyword id="KW-0560">Oxidoreductase</keyword>
<keyword id="KW-0664">Pyridoxine biosynthesis</keyword>
<accession>Q1RBF7</accession>
<organism>
    <name type="scientific">Escherichia coli (strain UTI89 / UPEC)</name>
    <dbReference type="NCBI Taxonomy" id="364106"/>
    <lineage>
        <taxon>Bacteria</taxon>
        <taxon>Pseudomonadati</taxon>
        <taxon>Pseudomonadota</taxon>
        <taxon>Gammaproteobacteria</taxon>
        <taxon>Enterobacterales</taxon>
        <taxon>Enterobacteriaceae</taxon>
        <taxon>Escherichia</taxon>
    </lineage>
</organism>